<organismHost>
    <name type="scientific">Homo sapiens</name>
    <name type="common">Human</name>
    <dbReference type="NCBI Taxonomy" id="9606"/>
</organismHost>
<gene>
    <name type="primary">H</name>
</gene>
<comment type="function">
    <text evidence="2 3">Attaches the virus to the human SLAMF1/CD150 receptor for entry into host dendritic cells, macrophages, activated memory T cells and naive or memory B cells, thereby explaining the long immunosuppression that follows infection (By similarity). In the respiratory airways, binds to the NECTIN4 receptor for entry into the host cell (By similarity). Binding of H protein to the receptor induces a conformational change that allows the F protein to trigger virion/cell membranes fusion (By similarity).</text>
</comment>
<comment type="subunit">
    <text evidence="2 3">Homodimer; disulfide-linked (By similarity). Further forms homotetramer (dimer of dimers) (By similarity). Interacts (via C-terminus) with human NECTIN4 (via N-terminus); this interaction allows attachment to the respiratory epithelium and viral entry (By similarity). Interacts (via C-terminus) with human SLAMF1/CD150 (via N-terminus); this interaction allows attachment and viral entry into the CD150-expressing immune cells (By similarity).</text>
</comment>
<comment type="subcellular location">
    <subcellularLocation>
        <location evidence="5">Virion membrane</location>
        <topology evidence="5">Single-pass type II membrane protein</topology>
    </subcellularLocation>
    <subcellularLocation>
        <location evidence="1">Host cell membrane</location>
        <topology evidence="1">Single-pass type II membrane protein</topology>
    </subcellularLocation>
</comment>
<comment type="miscellaneous">
    <text evidence="3">Infecting host innate immune cells allows the virus to disseminate from the upper respiratory tract to lymphoid organs, and later back to the respiratory tract.</text>
</comment>
<comment type="similarity">
    <text evidence="5">Belongs to the paramyxoviruses hemagglutinin-neuraminidase family. Non-sialidase subfamily.</text>
</comment>
<comment type="caution">
    <text evidence="5">Morbiliviruses hemagglutinins have no neuraminidase activity.</text>
</comment>
<sequence>MSPQRDRTNAFYKDNPHPKGSRIVINREHLMIDRPYVLLAILFVMFLSLIGLLAIAGIRLHQAAIHTAEIHKSLSTNLDVTNSIEHQVKDVLTPLFKIIGDEVGLRTPQRFTDLVKFISDKIKFLNPDREYDFRDLNWCINPPERIKLDYDQYCADVAAEELMNALVNSTLLETRTTNQFLAVSKGNCSGPTTIRGQFSNMSTSLLDLYLSRGYNVSSIVTMTSQGMYGGTYLVEKPNLSSKRSELSQLSMYRVFEVGVIRNPGLGAPVFHMTNYFEQPVSNDLSNCMVALGEFKLAALCHREDSITIPYQGSGKGVSFQLVNLGVWKSPTDMQSWIPLSTDDPVIDRLYLSSHRGVIADNQAKWAVPTTRTDDKLRMETCFQQACKGKIQALCENPEWAPLKDNRIPSYGVLSVDLSPTVELKIKIASGFGPLITHGSGMDLYKSNHNNVYWLTIPPMKNLALGVINTLEWIPRFKVSPNLFTVPIKEAGKDCHAPTYLPAEVDGDVKLSSNLVILPGQDLQYVLATYDTSRVEHAVVYYVYSPGRSFSYFYPFRLPIRGVPIELQVECFTWDQKLWCRHFCVLANSESGGHITHSGMVGMGVSCTVTREDGTNRRQSC</sequence>
<dbReference type="EMBL" id="D10549">
    <property type="protein sequence ID" value="BAA01406.1"/>
    <property type="molecule type" value="mRNA"/>
</dbReference>
<dbReference type="PIR" id="JU0273">
    <property type="entry name" value="JU0273"/>
</dbReference>
<dbReference type="SMR" id="P28081"/>
<dbReference type="IntAct" id="P28081">
    <property type="interactions" value="1"/>
</dbReference>
<dbReference type="GlyCosmos" id="P28081">
    <property type="glycosylation" value="5 sites, No reported glycans"/>
</dbReference>
<dbReference type="GO" id="GO:0020002">
    <property type="term" value="C:host cell plasma membrane"/>
    <property type="evidence" value="ECO:0007669"/>
    <property type="project" value="UniProtKB-SubCell"/>
</dbReference>
<dbReference type="GO" id="GO:0016020">
    <property type="term" value="C:membrane"/>
    <property type="evidence" value="ECO:0007669"/>
    <property type="project" value="UniProtKB-KW"/>
</dbReference>
<dbReference type="GO" id="GO:0019031">
    <property type="term" value="C:viral envelope"/>
    <property type="evidence" value="ECO:0007669"/>
    <property type="project" value="UniProtKB-KW"/>
</dbReference>
<dbReference type="GO" id="GO:0055036">
    <property type="term" value="C:virion membrane"/>
    <property type="evidence" value="ECO:0007669"/>
    <property type="project" value="UniProtKB-SubCell"/>
</dbReference>
<dbReference type="GO" id="GO:0046789">
    <property type="term" value="F:host cell surface receptor binding"/>
    <property type="evidence" value="ECO:0007669"/>
    <property type="project" value="InterPro"/>
</dbReference>
<dbReference type="GO" id="GO:0046718">
    <property type="term" value="P:symbiont entry into host cell"/>
    <property type="evidence" value="ECO:0007669"/>
    <property type="project" value="UniProtKB-KW"/>
</dbReference>
<dbReference type="GO" id="GO:0019062">
    <property type="term" value="P:virion attachment to host cell"/>
    <property type="evidence" value="ECO:0007669"/>
    <property type="project" value="UniProtKB-KW"/>
</dbReference>
<dbReference type="CDD" id="cd15467">
    <property type="entry name" value="MV-h"/>
    <property type="match status" value="1"/>
</dbReference>
<dbReference type="FunFam" id="2.120.10.10:FF:000007">
    <property type="entry name" value="Hemagglutinin glycoprotein"/>
    <property type="match status" value="1"/>
</dbReference>
<dbReference type="Gene3D" id="2.120.10.10">
    <property type="match status" value="1"/>
</dbReference>
<dbReference type="InterPro" id="IPR000665">
    <property type="entry name" value="Hemagglutn/HN"/>
</dbReference>
<dbReference type="InterPro" id="IPR049617">
    <property type="entry name" value="MV-h_C"/>
</dbReference>
<dbReference type="InterPro" id="IPR036278">
    <property type="entry name" value="Sialidase_sf"/>
</dbReference>
<dbReference type="Pfam" id="PF00423">
    <property type="entry name" value="HN"/>
    <property type="match status" value="1"/>
</dbReference>
<dbReference type="SUPFAM" id="SSF50939">
    <property type="entry name" value="Sialidases"/>
    <property type="match status" value="1"/>
</dbReference>
<evidence type="ECO:0000250" key="1"/>
<evidence type="ECO:0000250" key="2">
    <source>
        <dbReference type="UniProtKB" id="P08362"/>
    </source>
</evidence>
<evidence type="ECO:0000250" key="3">
    <source>
        <dbReference type="UniProtKB" id="Q786F2"/>
    </source>
</evidence>
<evidence type="ECO:0000255" key="4"/>
<evidence type="ECO:0000305" key="5"/>
<keyword id="KW-1015">Disulfide bond</keyword>
<keyword id="KW-0325">Glycoprotein</keyword>
<keyword id="KW-0348">Hemagglutinin</keyword>
<keyword id="KW-1032">Host cell membrane</keyword>
<keyword id="KW-1043">Host membrane</keyword>
<keyword id="KW-0945">Host-virus interaction</keyword>
<keyword id="KW-0472">Membrane</keyword>
<keyword id="KW-0735">Signal-anchor</keyword>
<keyword id="KW-0812">Transmembrane</keyword>
<keyword id="KW-1133">Transmembrane helix</keyword>
<keyword id="KW-1161">Viral attachment to host cell</keyword>
<keyword id="KW-0261">Viral envelope protein</keyword>
<keyword id="KW-0946">Virion</keyword>
<keyword id="KW-1160">Virus entry into host cell</keyword>
<organism>
    <name type="scientific">Measles virus (strain Yamagata-1)</name>
    <name type="common">MeV</name>
    <name type="synonym">Subacute sclerose panencephalitis virus</name>
    <dbReference type="NCBI Taxonomy" id="11239"/>
    <lineage>
        <taxon>Viruses</taxon>
        <taxon>Riboviria</taxon>
        <taxon>Orthornavirae</taxon>
        <taxon>Negarnaviricota</taxon>
        <taxon>Haploviricotina</taxon>
        <taxon>Monjiviricetes</taxon>
        <taxon>Mononegavirales</taxon>
        <taxon>Paramyxoviridae</taxon>
        <taxon>Orthoparamyxovirinae</taxon>
        <taxon>Morbillivirus</taxon>
        <taxon>Morbillivirus hominis</taxon>
        <taxon>Measles morbillivirus</taxon>
    </lineage>
</organism>
<name>HEMA_MEASY</name>
<proteinExistence type="evidence at transcript level"/>
<reference key="1">
    <citation type="journal article" date="1990" name="Virus Genes">
        <title>Molecular analysis of structural protein genes of the Yamagata-1 strain of defective subacute sclerosing panencephalitis virus. III. Nucleotide sequence of the hemagglutinin gene.</title>
        <authorList>
            <person name="Komase K."/>
            <person name="Haga T."/>
            <person name="Yoshikawa Y."/>
            <person name="Sato T.A."/>
            <person name="Yamanouchi K."/>
        </authorList>
    </citation>
    <scope>NUCLEOTIDE SEQUENCE [MRNA]</scope>
</reference>
<feature type="chain" id="PRO_0000142602" description="Hemagglutinin glycoprotein">
    <location>
        <begin position="1"/>
        <end position="620"/>
    </location>
</feature>
<feature type="topological domain" description="Intravirion" evidence="4">
    <location>
        <begin position="1"/>
        <end position="37"/>
    </location>
</feature>
<feature type="transmembrane region" description="Helical; Signal-anchor for type II membrane protein" evidence="4">
    <location>
        <begin position="38"/>
        <end position="58"/>
    </location>
</feature>
<feature type="topological domain" description="Virion surface" evidence="4">
    <location>
        <begin position="59"/>
        <end position="620"/>
    </location>
</feature>
<feature type="region of interest" description="Stalk" evidence="2">
    <location>
        <begin position="1"/>
        <end position="154"/>
    </location>
</feature>
<feature type="region of interest" description="Interaction with host NECTIN4 receptor" evidence="3">
    <location>
        <begin position="458"/>
        <end position="543"/>
    </location>
</feature>
<feature type="site" description="Interaction with host SLAMF1 receptor" evidence="2">
    <location>
        <position position="483"/>
    </location>
</feature>
<feature type="site" description="Interaction with host SLAMF1 receptor" evidence="2">
    <location>
        <position position="505"/>
    </location>
</feature>
<feature type="site" description="Interaction with host SLAMF1 receptor" evidence="2">
    <location>
        <position position="507"/>
    </location>
</feature>
<feature type="site" description="Interaction with host SLAMF1 receptor" evidence="2">
    <location>
        <position position="524"/>
    </location>
</feature>
<feature type="site" description="Interaction with host SLAMF1 receptor" evidence="2">
    <location>
        <position position="530"/>
    </location>
</feature>
<feature type="site" description="Interaction with host SLAMF1 receptor" evidence="2">
    <location>
        <position position="533"/>
    </location>
</feature>
<feature type="site" description="Interaction with host SLAMF1 receptor" evidence="2">
    <location>
        <position position="541"/>
    </location>
</feature>
<feature type="site" description="Interaction with host SLAMF1 receptor" evidence="2">
    <location>
        <position position="543"/>
    </location>
</feature>
<feature type="site" description="Interaction with host SLAMF1 receptor" evidence="2">
    <location>
        <position position="545"/>
    </location>
</feature>
<feature type="site" description="Interaction with host SLAMF1 receptor" evidence="2">
    <location>
        <position position="552"/>
    </location>
</feature>
<feature type="site" description="Interaction with host SLAMF1 receptor" evidence="2">
    <location>
        <position position="554"/>
    </location>
</feature>
<feature type="glycosylation site" description="N-linked (GlcNAc...) asparagine; by host" evidence="4">
    <location>
        <position position="168"/>
    </location>
</feature>
<feature type="glycosylation site" description="N-linked (GlcNAc...) asparagine; by host" evidence="4">
    <location>
        <position position="187"/>
    </location>
</feature>
<feature type="glycosylation site" description="N-linked (GlcNAc...) asparagine; by host" evidence="4">
    <location>
        <position position="200"/>
    </location>
</feature>
<feature type="glycosylation site" description="N-linked (GlcNAc...) asparagine; by host" evidence="4">
    <location>
        <position position="215"/>
    </location>
</feature>
<feature type="glycosylation site" description="N-linked (GlcNAc...) asparagine; by host" evidence="4">
    <location>
        <position position="238"/>
    </location>
</feature>
<feature type="disulfide bond" description="Interchain" evidence="2">
    <location>
        <position position="139"/>
    </location>
</feature>
<feature type="disulfide bond" description="Interchain" evidence="2">
    <location>
        <position position="154"/>
    </location>
</feature>
<feature type="disulfide bond" evidence="2">
    <location>
        <begin position="188"/>
        <end position="606"/>
    </location>
</feature>
<feature type="disulfide bond" evidence="2">
    <location>
        <begin position="287"/>
        <end position="300"/>
    </location>
</feature>
<feature type="disulfide bond" evidence="2">
    <location>
        <begin position="381"/>
        <end position="494"/>
    </location>
</feature>
<feature type="disulfide bond" evidence="2">
    <location>
        <begin position="386"/>
        <end position="394"/>
    </location>
</feature>
<feature type="disulfide bond" evidence="2">
    <location>
        <begin position="570"/>
        <end position="579"/>
    </location>
</feature>
<protein>
    <recommendedName>
        <fullName>Hemagglutinin glycoprotein</fullName>
    </recommendedName>
</protein>
<accession>P28081</accession>